<dbReference type="EMBL" id="CP000423">
    <property type="protein sequence ID" value="ABJ70497.1"/>
    <property type="molecule type" value="Genomic_DNA"/>
</dbReference>
<dbReference type="RefSeq" id="WP_011674588.1">
    <property type="nucleotide sequence ID" value="NC_008526.1"/>
</dbReference>
<dbReference type="RefSeq" id="YP_806939.1">
    <property type="nucleotide sequence ID" value="NC_008526.1"/>
</dbReference>
<dbReference type="SMR" id="Q037X5"/>
<dbReference type="STRING" id="321967.LSEI_1724"/>
<dbReference type="PaxDb" id="321967-LSEI_1724"/>
<dbReference type="KEGG" id="lca:LSEI_1724"/>
<dbReference type="PATRIC" id="fig|321967.11.peg.1704"/>
<dbReference type="HOGENOM" id="CLU_140243_3_1_9"/>
<dbReference type="Proteomes" id="UP000001651">
    <property type="component" value="Chromosome"/>
</dbReference>
<dbReference type="Gene3D" id="1.20.1500.10">
    <property type="entry name" value="YheA/YmcA-like"/>
    <property type="match status" value="1"/>
</dbReference>
<dbReference type="HAMAP" id="MF_01526">
    <property type="entry name" value="UPF0342"/>
    <property type="match status" value="1"/>
</dbReference>
<dbReference type="InterPro" id="IPR010368">
    <property type="entry name" value="Com_YlbF"/>
</dbReference>
<dbReference type="InterPro" id="IPR023378">
    <property type="entry name" value="YheA/YmcA-like_dom_sf"/>
</dbReference>
<dbReference type="Pfam" id="PF06133">
    <property type="entry name" value="Com_YlbF"/>
    <property type="match status" value="1"/>
</dbReference>
<dbReference type="SUPFAM" id="SSF158622">
    <property type="entry name" value="YheA/YmcA-like"/>
    <property type="match status" value="1"/>
</dbReference>
<feature type="chain" id="PRO_0000292731" description="UPF0342 protein LSEI_1724">
    <location>
        <begin position="1"/>
        <end position="114"/>
    </location>
</feature>
<comment type="similarity">
    <text evidence="1">Belongs to the UPF0342 family.</text>
</comment>
<organism>
    <name type="scientific">Lacticaseibacillus paracasei (strain ATCC 334 / BCRC 17002 / CCUG 31169 / CIP 107868 / KCTC 3260 / NRRL B-441)</name>
    <name type="common">Lactobacillus paracasei</name>
    <dbReference type="NCBI Taxonomy" id="321967"/>
    <lineage>
        <taxon>Bacteria</taxon>
        <taxon>Bacillati</taxon>
        <taxon>Bacillota</taxon>
        <taxon>Bacilli</taxon>
        <taxon>Lactobacillales</taxon>
        <taxon>Lactobacillaceae</taxon>
        <taxon>Lacticaseibacillus</taxon>
    </lineage>
</organism>
<keyword id="KW-1185">Reference proteome</keyword>
<sequence length="114" mass="13162">MANVYDTANQMAADIKTTQEFQDLKKAFDLLKLDTVAYGLFQQFQQKQYEMQQKSMQGQDFTDDEVKSLQELGDKMRGIQPIQNLMAKEQGLSQMMDELNKIISQPIIDVYQGK</sequence>
<name>Y1724_LACP3</name>
<proteinExistence type="inferred from homology"/>
<gene>
    <name type="ordered locus">LSEI_1724</name>
</gene>
<protein>
    <recommendedName>
        <fullName evidence="1">UPF0342 protein LSEI_1724</fullName>
    </recommendedName>
</protein>
<reference key="1">
    <citation type="journal article" date="2006" name="Proc. Natl. Acad. Sci. U.S.A.">
        <title>Comparative genomics of the lactic acid bacteria.</title>
        <authorList>
            <person name="Makarova K.S."/>
            <person name="Slesarev A."/>
            <person name="Wolf Y.I."/>
            <person name="Sorokin A."/>
            <person name="Mirkin B."/>
            <person name="Koonin E.V."/>
            <person name="Pavlov A."/>
            <person name="Pavlova N."/>
            <person name="Karamychev V."/>
            <person name="Polouchine N."/>
            <person name="Shakhova V."/>
            <person name="Grigoriev I."/>
            <person name="Lou Y."/>
            <person name="Rohksar D."/>
            <person name="Lucas S."/>
            <person name="Huang K."/>
            <person name="Goodstein D.M."/>
            <person name="Hawkins T."/>
            <person name="Plengvidhya V."/>
            <person name="Welker D."/>
            <person name="Hughes J."/>
            <person name="Goh Y."/>
            <person name="Benson A."/>
            <person name="Baldwin K."/>
            <person name="Lee J.-H."/>
            <person name="Diaz-Muniz I."/>
            <person name="Dosti B."/>
            <person name="Smeianov V."/>
            <person name="Wechter W."/>
            <person name="Barabote R."/>
            <person name="Lorca G."/>
            <person name="Altermann E."/>
            <person name="Barrangou R."/>
            <person name="Ganesan B."/>
            <person name="Xie Y."/>
            <person name="Rawsthorne H."/>
            <person name="Tamir D."/>
            <person name="Parker C."/>
            <person name="Breidt F."/>
            <person name="Broadbent J.R."/>
            <person name="Hutkins R."/>
            <person name="O'Sullivan D."/>
            <person name="Steele J."/>
            <person name="Unlu G."/>
            <person name="Saier M.H. Jr."/>
            <person name="Klaenhammer T."/>
            <person name="Richardson P."/>
            <person name="Kozyavkin S."/>
            <person name="Weimer B.C."/>
            <person name="Mills D.A."/>
        </authorList>
    </citation>
    <scope>NUCLEOTIDE SEQUENCE [LARGE SCALE GENOMIC DNA]</scope>
    <source>
        <strain>ATCC 334 / BCRC 17002 / CCUG 31169 / CIP 107868 / KCTC 3260 / NRRL B-441</strain>
    </source>
</reference>
<accession>Q037X5</accession>
<evidence type="ECO:0000255" key="1">
    <source>
        <dbReference type="HAMAP-Rule" id="MF_01526"/>
    </source>
</evidence>